<keyword id="KW-1185">Reference proteome</keyword>
<dbReference type="EMBL" id="AE014075">
    <property type="protein sequence ID" value="AAN80372.1"/>
    <property type="molecule type" value="Genomic_DNA"/>
</dbReference>
<dbReference type="RefSeq" id="WP_000841554.1">
    <property type="nucleotide sequence ID" value="NZ_CP051263.1"/>
</dbReference>
<dbReference type="STRING" id="199310.c1913"/>
<dbReference type="GeneID" id="93775639"/>
<dbReference type="KEGG" id="ecc:c1913"/>
<dbReference type="eggNOG" id="ENOG5031KY9">
    <property type="taxonomic scope" value="Bacteria"/>
</dbReference>
<dbReference type="HOGENOM" id="CLU_210948_0_0_6"/>
<dbReference type="BioCyc" id="ECOL199310:C1913-MONOMER"/>
<dbReference type="Proteomes" id="UP000001410">
    <property type="component" value="Chromosome"/>
</dbReference>
<dbReference type="GO" id="GO:0006412">
    <property type="term" value="P:translation"/>
    <property type="evidence" value="ECO:0007669"/>
    <property type="project" value="InterPro"/>
</dbReference>
<dbReference type="InterPro" id="IPR012607">
    <property type="entry name" value="SRA-like"/>
</dbReference>
<dbReference type="NCBIfam" id="NF007473">
    <property type="entry name" value="PRK10057.1"/>
    <property type="match status" value="1"/>
</dbReference>
<dbReference type="Pfam" id="PF08136">
    <property type="entry name" value="SRA_like"/>
    <property type="match status" value="1"/>
</dbReference>
<proteinExistence type="inferred from homology"/>
<protein>
    <recommendedName>
        <fullName>Stationary-phase-induced ribosome-associated protein</fullName>
        <shortName>SRA</shortName>
    </recommendedName>
    <alternativeName>
        <fullName>30S ribosomal protein S22</fullName>
    </alternativeName>
</protein>
<sequence length="45" mass="5096">MKSNRQARHILGLDHKISNQRKIVTEGDKSSVVNNPTGRKRPAEK</sequence>
<evidence type="ECO:0000250" key="1"/>
<evidence type="ECO:0000256" key="2">
    <source>
        <dbReference type="SAM" id="MobiDB-lite"/>
    </source>
</evidence>
<evidence type="ECO:0000305" key="3"/>
<feature type="chain" id="PRO_0000208691" description="Stationary-phase-induced ribosome-associated protein">
    <location>
        <begin position="1"/>
        <end position="45"/>
    </location>
</feature>
<feature type="region of interest" description="Disordered" evidence="2">
    <location>
        <begin position="21"/>
        <end position="45"/>
    </location>
</feature>
<gene>
    <name type="primary">sra</name>
    <name type="synonym">rpsV</name>
    <name type="ordered locus">c1913</name>
</gene>
<reference key="1">
    <citation type="journal article" date="2002" name="Proc. Natl. Acad. Sci. U.S.A.">
        <title>Extensive mosaic structure revealed by the complete genome sequence of uropathogenic Escherichia coli.</title>
        <authorList>
            <person name="Welch R.A."/>
            <person name="Burland V."/>
            <person name="Plunkett G. III"/>
            <person name="Redford P."/>
            <person name="Roesch P."/>
            <person name="Rasko D."/>
            <person name="Buckles E.L."/>
            <person name="Liou S.-R."/>
            <person name="Boutin A."/>
            <person name="Hackett J."/>
            <person name="Stroud D."/>
            <person name="Mayhew G.F."/>
            <person name="Rose D.J."/>
            <person name="Zhou S."/>
            <person name="Schwartz D.C."/>
            <person name="Perna N.T."/>
            <person name="Mobley H.L.T."/>
            <person name="Donnenberg M.S."/>
            <person name="Blattner F.R."/>
        </authorList>
    </citation>
    <scope>NUCLEOTIDE SEQUENCE [LARGE SCALE GENOMIC DNA]</scope>
    <source>
        <strain>CFT073 / ATCC 700928 / UPEC</strain>
    </source>
</reference>
<comment type="function">
    <text evidence="1">Although this protein associates with the 30S subunit of the ribosome it is not considered to be a bona fide ribosomal protein.</text>
</comment>
<comment type="subunit">
    <text evidence="1">Associates exclusively with the 30S subunit; there is 0.1 copy per ribosome in the exponential phase and 0.4 copies per ribosome in the stationary phase.</text>
</comment>
<comment type="similarity">
    <text evidence="3">Belongs to the SRA family.</text>
</comment>
<organism>
    <name type="scientific">Escherichia coli O6:H1 (strain CFT073 / ATCC 700928 / UPEC)</name>
    <dbReference type="NCBI Taxonomy" id="199310"/>
    <lineage>
        <taxon>Bacteria</taxon>
        <taxon>Pseudomonadati</taxon>
        <taxon>Pseudomonadota</taxon>
        <taxon>Gammaproteobacteria</taxon>
        <taxon>Enterobacterales</taxon>
        <taxon>Enterobacteriaceae</taxon>
        <taxon>Escherichia</taxon>
    </lineage>
</organism>
<name>SRA_ECOL6</name>
<accession>P68192</accession>
<accession>P28690</accession>